<accession>P63375</accession>
<accession>Q48YK3</accession>
<accession>Q8P0V4</accession>
<accession>Q99ZG5</accession>
<gene>
    <name evidence="1" type="primary">pstB1</name>
    <name type="synonym">pstB</name>
    <name type="ordered locus">SPy_1241</name>
    <name type="ordered locus">M5005_Spy0951</name>
</gene>
<reference key="1">
    <citation type="journal article" date="2001" name="Proc. Natl. Acad. Sci. U.S.A.">
        <title>Complete genome sequence of an M1 strain of Streptococcus pyogenes.</title>
        <authorList>
            <person name="Ferretti J.J."/>
            <person name="McShan W.M."/>
            <person name="Ajdic D.J."/>
            <person name="Savic D.J."/>
            <person name="Savic G."/>
            <person name="Lyon K."/>
            <person name="Primeaux C."/>
            <person name="Sezate S."/>
            <person name="Suvorov A.N."/>
            <person name="Kenton S."/>
            <person name="Lai H.S."/>
            <person name="Lin S.P."/>
            <person name="Qian Y."/>
            <person name="Jia H.G."/>
            <person name="Najar F.Z."/>
            <person name="Ren Q."/>
            <person name="Zhu H."/>
            <person name="Song L."/>
            <person name="White J."/>
            <person name="Yuan X."/>
            <person name="Clifton S.W."/>
            <person name="Roe B.A."/>
            <person name="McLaughlin R.E."/>
        </authorList>
    </citation>
    <scope>NUCLEOTIDE SEQUENCE [LARGE SCALE GENOMIC DNA]</scope>
    <source>
        <strain>ATCC 700294 / SF370 / Serotype M1</strain>
    </source>
</reference>
<reference key="2">
    <citation type="journal article" date="2005" name="J. Infect. Dis.">
        <title>Evolutionary origin and emergence of a highly successful clone of serotype M1 group A Streptococcus involved multiple horizontal gene transfer events.</title>
        <authorList>
            <person name="Sumby P."/>
            <person name="Porcella S.F."/>
            <person name="Madrigal A.G."/>
            <person name="Barbian K.D."/>
            <person name="Virtaneva K."/>
            <person name="Ricklefs S.M."/>
            <person name="Sturdevant D.E."/>
            <person name="Graham M.R."/>
            <person name="Vuopio-Varkila J."/>
            <person name="Hoe N.P."/>
            <person name="Musser J.M."/>
        </authorList>
    </citation>
    <scope>NUCLEOTIDE SEQUENCE [LARGE SCALE GENOMIC DNA]</scope>
    <source>
        <strain>ATCC BAA-947 / MGAS5005 / Serotype M1</strain>
    </source>
</reference>
<organism>
    <name type="scientific">Streptococcus pyogenes serotype M1</name>
    <dbReference type="NCBI Taxonomy" id="301447"/>
    <lineage>
        <taxon>Bacteria</taxon>
        <taxon>Bacillati</taxon>
        <taxon>Bacillota</taxon>
        <taxon>Bacilli</taxon>
        <taxon>Lactobacillales</taxon>
        <taxon>Streptococcaceae</taxon>
        <taxon>Streptococcus</taxon>
    </lineage>
</organism>
<sequence>MTEPILQIRDLSVYYNQKKTLKDVSLDLYPNEITALIGPSGSGKSTLLRSINRMNDLNPEVTITGSIVYNGHNIYSPRTDTVDLRKEIGMVFQQPNPFPMSIYENVVYGLRLKGIRDKSILDHAVESSLKGASIWNEVKDRLHDSAVGLSGGQQQRVCIARVLATSPRIILLDEPTSALDPISAGKIEETLLLLKKDYTLAIVTRSMQQASRLSDRTGFFLEGDLLECGPTKAMFMNPKRKETEDYISGKFG</sequence>
<proteinExistence type="inferred from homology"/>
<evidence type="ECO:0000255" key="1">
    <source>
        <dbReference type="HAMAP-Rule" id="MF_01702"/>
    </source>
</evidence>
<evidence type="ECO:0000305" key="2"/>
<keyword id="KW-0067">ATP-binding</keyword>
<keyword id="KW-1003">Cell membrane</keyword>
<keyword id="KW-0472">Membrane</keyword>
<keyword id="KW-0547">Nucleotide-binding</keyword>
<keyword id="KW-0592">Phosphate transport</keyword>
<keyword id="KW-1185">Reference proteome</keyword>
<keyword id="KW-1278">Translocase</keyword>
<keyword id="KW-0813">Transport</keyword>
<feature type="chain" id="PRO_0000092903" description="Phosphate import ATP-binding protein PstB 1">
    <location>
        <begin position="1"/>
        <end position="252"/>
    </location>
</feature>
<feature type="domain" description="ABC transporter" evidence="1">
    <location>
        <begin position="6"/>
        <end position="247"/>
    </location>
</feature>
<feature type="binding site" evidence="1">
    <location>
        <begin position="38"/>
        <end position="45"/>
    </location>
    <ligand>
        <name>ATP</name>
        <dbReference type="ChEBI" id="CHEBI:30616"/>
    </ligand>
</feature>
<dbReference type="EC" id="7.3.2.1" evidence="1"/>
<dbReference type="EMBL" id="AE004092">
    <property type="protein sequence ID" value="AAK34096.1"/>
    <property type="status" value="ALT_INIT"/>
    <property type="molecule type" value="Genomic_DNA"/>
</dbReference>
<dbReference type="EMBL" id="CP000017">
    <property type="protein sequence ID" value="AAZ51569.1"/>
    <property type="molecule type" value="Genomic_DNA"/>
</dbReference>
<dbReference type="RefSeq" id="NP_269375.1">
    <property type="nucleotide sequence ID" value="NC_002737.2"/>
</dbReference>
<dbReference type="SMR" id="P63375"/>
<dbReference type="PaxDb" id="1314-HKU360_00996"/>
<dbReference type="KEGG" id="spy:SPy_1241"/>
<dbReference type="KEGG" id="spz:M5005_Spy0951"/>
<dbReference type="PATRIC" id="fig|160490.10.peg.1084"/>
<dbReference type="HOGENOM" id="CLU_000604_1_22_9"/>
<dbReference type="OMA" id="AFMYMGD"/>
<dbReference type="Proteomes" id="UP000000750">
    <property type="component" value="Chromosome"/>
</dbReference>
<dbReference type="GO" id="GO:0005886">
    <property type="term" value="C:plasma membrane"/>
    <property type="evidence" value="ECO:0007669"/>
    <property type="project" value="UniProtKB-SubCell"/>
</dbReference>
<dbReference type="GO" id="GO:0005524">
    <property type="term" value="F:ATP binding"/>
    <property type="evidence" value="ECO:0007669"/>
    <property type="project" value="UniProtKB-KW"/>
</dbReference>
<dbReference type="GO" id="GO:0016887">
    <property type="term" value="F:ATP hydrolysis activity"/>
    <property type="evidence" value="ECO:0007669"/>
    <property type="project" value="InterPro"/>
</dbReference>
<dbReference type="GO" id="GO:0015415">
    <property type="term" value="F:ATPase-coupled phosphate ion transmembrane transporter activity"/>
    <property type="evidence" value="ECO:0007669"/>
    <property type="project" value="UniProtKB-EC"/>
</dbReference>
<dbReference type="GO" id="GO:0035435">
    <property type="term" value="P:phosphate ion transmembrane transport"/>
    <property type="evidence" value="ECO:0007669"/>
    <property type="project" value="InterPro"/>
</dbReference>
<dbReference type="CDD" id="cd03260">
    <property type="entry name" value="ABC_PstB_phosphate_transporter"/>
    <property type="match status" value="1"/>
</dbReference>
<dbReference type="Gene3D" id="3.40.50.300">
    <property type="entry name" value="P-loop containing nucleotide triphosphate hydrolases"/>
    <property type="match status" value="1"/>
</dbReference>
<dbReference type="InterPro" id="IPR003593">
    <property type="entry name" value="AAA+_ATPase"/>
</dbReference>
<dbReference type="InterPro" id="IPR003439">
    <property type="entry name" value="ABC_transporter-like_ATP-bd"/>
</dbReference>
<dbReference type="InterPro" id="IPR017871">
    <property type="entry name" value="ABC_transporter-like_CS"/>
</dbReference>
<dbReference type="InterPro" id="IPR027417">
    <property type="entry name" value="P-loop_NTPase"/>
</dbReference>
<dbReference type="InterPro" id="IPR005670">
    <property type="entry name" value="PstB-like"/>
</dbReference>
<dbReference type="NCBIfam" id="TIGR00972">
    <property type="entry name" value="3a0107s01c2"/>
    <property type="match status" value="1"/>
</dbReference>
<dbReference type="PANTHER" id="PTHR43423">
    <property type="entry name" value="ABC TRANSPORTER I FAMILY MEMBER 17"/>
    <property type="match status" value="1"/>
</dbReference>
<dbReference type="PANTHER" id="PTHR43423:SF1">
    <property type="entry name" value="ABC TRANSPORTER I FAMILY MEMBER 17"/>
    <property type="match status" value="1"/>
</dbReference>
<dbReference type="Pfam" id="PF00005">
    <property type="entry name" value="ABC_tran"/>
    <property type="match status" value="1"/>
</dbReference>
<dbReference type="SMART" id="SM00382">
    <property type="entry name" value="AAA"/>
    <property type="match status" value="1"/>
</dbReference>
<dbReference type="SUPFAM" id="SSF52540">
    <property type="entry name" value="P-loop containing nucleoside triphosphate hydrolases"/>
    <property type="match status" value="1"/>
</dbReference>
<dbReference type="PROSITE" id="PS00211">
    <property type="entry name" value="ABC_TRANSPORTER_1"/>
    <property type="match status" value="1"/>
</dbReference>
<dbReference type="PROSITE" id="PS50893">
    <property type="entry name" value="ABC_TRANSPORTER_2"/>
    <property type="match status" value="1"/>
</dbReference>
<dbReference type="PROSITE" id="PS51238">
    <property type="entry name" value="PSTB"/>
    <property type="match status" value="1"/>
</dbReference>
<protein>
    <recommendedName>
        <fullName evidence="1">Phosphate import ATP-binding protein PstB 1</fullName>
        <ecNumber evidence="1">7.3.2.1</ecNumber>
    </recommendedName>
    <alternativeName>
        <fullName evidence="1">ABC phosphate transporter 1</fullName>
    </alternativeName>
    <alternativeName>
        <fullName evidence="1">Phosphate-transporting ATPase 1</fullName>
    </alternativeName>
</protein>
<comment type="function">
    <text evidence="1">Part of the ABC transporter complex PstSACB involved in phosphate import. Responsible for energy coupling to the transport system.</text>
</comment>
<comment type="catalytic activity">
    <reaction evidence="1">
        <text>phosphate(out) + ATP + H2O = ADP + 2 phosphate(in) + H(+)</text>
        <dbReference type="Rhea" id="RHEA:24440"/>
        <dbReference type="ChEBI" id="CHEBI:15377"/>
        <dbReference type="ChEBI" id="CHEBI:15378"/>
        <dbReference type="ChEBI" id="CHEBI:30616"/>
        <dbReference type="ChEBI" id="CHEBI:43474"/>
        <dbReference type="ChEBI" id="CHEBI:456216"/>
        <dbReference type="EC" id="7.3.2.1"/>
    </reaction>
</comment>
<comment type="subunit">
    <text evidence="1">The complex is composed of two ATP-binding proteins (PstB), two transmembrane proteins (PstC and PstA) and a solute-binding protein (PstS).</text>
</comment>
<comment type="subcellular location">
    <subcellularLocation>
        <location evidence="1">Cell membrane</location>
        <topology evidence="1">Peripheral membrane protein</topology>
    </subcellularLocation>
</comment>
<comment type="similarity">
    <text evidence="1">Belongs to the ABC transporter superfamily. Phosphate importer (TC 3.A.1.7) family.</text>
</comment>
<comment type="sequence caution" evidence="2">
    <conflict type="erroneous initiation">
        <sequence resource="EMBL-CDS" id="AAK34096"/>
    </conflict>
</comment>
<name>PSTB1_STRP1</name>